<accession>Q8DEZ8</accession>
<evidence type="ECO:0000255" key="1">
    <source>
        <dbReference type="HAMAP-Rule" id="MF_00159"/>
    </source>
</evidence>
<gene>
    <name evidence="1" type="primary">ispG</name>
    <name type="ordered locus">VV1_0427</name>
</gene>
<proteinExistence type="inferred from homology"/>
<name>ISPG_VIBVU</name>
<feature type="chain" id="PRO_0000190654" description="4-hydroxy-3-methylbut-2-en-1-yl diphosphate synthase (flavodoxin)">
    <location>
        <begin position="1"/>
        <end position="372"/>
    </location>
</feature>
<feature type="binding site" evidence="1">
    <location>
        <position position="270"/>
    </location>
    <ligand>
        <name>[4Fe-4S] cluster</name>
        <dbReference type="ChEBI" id="CHEBI:49883"/>
    </ligand>
</feature>
<feature type="binding site" evidence="1">
    <location>
        <position position="273"/>
    </location>
    <ligand>
        <name>[4Fe-4S] cluster</name>
        <dbReference type="ChEBI" id="CHEBI:49883"/>
    </ligand>
</feature>
<feature type="binding site" evidence="1">
    <location>
        <position position="305"/>
    </location>
    <ligand>
        <name>[4Fe-4S] cluster</name>
        <dbReference type="ChEBI" id="CHEBI:49883"/>
    </ligand>
</feature>
<feature type="binding site" evidence="1">
    <location>
        <position position="312"/>
    </location>
    <ligand>
        <name>[4Fe-4S] cluster</name>
        <dbReference type="ChEBI" id="CHEBI:49883"/>
    </ligand>
</feature>
<reference key="1">
    <citation type="submission" date="2002-12" db="EMBL/GenBank/DDBJ databases">
        <title>Complete genome sequence of Vibrio vulnificus CMCP6.</title>
        <authorList>
            <person name="Rhee J.H."/>
            <person name="Kim S.Y."/>
            <person name="Chung S.S."/>
            <person name="Kim J.J."/>
            <person name="Moon Y.H."/>
            <person name="Jeong H."/>
            <person name="Choy H.E."/>
        </authorList>
    </citation>
    <scope>NUCLEOTIDE SEQUENCE [LARGE SCALE GENOMIC DNA]</scope>
    <source>
        <strain>CMCP6</strain>
    </source>
</reference>
<protein>
    <recommendedName>
        <fullName evidence="1">4-hydroxy-3-methylbut-2-en-1-yl diphosphate synthase (flavodoxin)</fullName>
        <ecNumber evidence="1">1.17.7.3</ecNumber>
    </recommendedName>
    <alternativeName>
        <fullName evidence="1">1-hydroxy-2-methyl-2-(E)-butenyl 4-diphosphate synthase</fullName>
    </alternativeName>
</protein>
<sequence>MHNESPIIRRKSTRIYVGDVPIGDGAPIAVQSMTNTRTTDVAATVAQIKALENVGADIVRVSVPTMDAAEAFKLIKQQVSIPLVADIHFDYRIALKVAEYGVDCLRINPGNIGNEERIRSVVDCARDKNIPIRIGVNGGSLEKDLQMKYGEPTPEALVESAMRHVDILDRLNFDQFKVSVKASDVFLAVDSYRLLAKKIDQPLHLGITEAGGARAGAVKSAVGLGMLLAEGIGDTLRISLAANPVEEIKVGFDILKSLRIRSRGINFIACPSCSRQEFDVISTVNALEERLEDIITPMDVSIIGCVVNGPGEAEVSHLGLAGSNKKSAFYEDGKRQKERFDNEDLVNQLEAKIRAKAARMDESNRIDIKVQN</sequence>
<keyword id="KW-0004">4Fe-4S</keyword>
<keyword id="KW-0408">Iron</keyword>
<keyword id="KW-0411">Iron-sulfur</keyword>
<keyword id="KW-0414">Isoprene biosynthesis</keyword>
<keyword id="KW-0479">Metal-binding</keyword>
<keyword id="KW-0560">Oxidoreductase</keyword>
<dbReference type="EC" id="1.17.7.3" evidence="1"/>
<dbReference type="EMBL" id="AE016795">
    <property type="protein sequence ID" value="AAO08950.1"/>
    <property type="molecule type" value="Genomic_DNA"/>
</dbReference>
<dbReference type="RefSeq" id="WP_011078526.1">
    <property type="nucleotide sequence ID" value="NC_004459.3"/>
</dbReference>
<dbReference type="SMR" id="Q8DEZ8"/>
<dbReference type="GeneID" id="93894732"/>
<dbReference type="KEGG" id="vvu:VV1_0427"/>
<dbReference type="HOGENOM" id="CLU_042258_0_0_6"/>
<dbReference type="UniPathway" id="UPA00056">
    <property type="reaction ID" value="UER00096"/>
</dbReference>
<dbReference type="Proteomes" id="UP000002275">
    <property type="component" value="Chromosome 1"/>
</dbReference>
<dbReference type="GO" id="GO:0051539">
    <property type="term" value="F:4 iron, 4 sulfur cluster binding"/>
    <property type="evidence" value="ECO:0007669"/>
    <property type="project" value="UniProtKB-UniRule"/>
</dbReference>
<dbReference type="GO" id="GO:0046429">
    <property type="term" value="F:4-hydroxy-3-methylbut-2-en-1-yl diphosphate synthase activity (ferredoxin)"/>
    <property type="evidence" value="ECO:0007669"/>
    <property type="project" value="UniProtKB-UniRule"/>
</dbReference>
<dbReference type="GO" id="GO:0141197">
    <property type="term" value="F:4-hydroxy-3-methylbut-2-enyl-diphosphate synthase activity (flavodoxin)"/>
    <property type="evidence" value="ECO:0007669"/>
    <property type="project" value="UniProtKB-EC"/>
</dbReference>
<dbReference type="GO" id="GO:0005506">
    <property type="term" value="F:iron ion binding"/>
    <property type="evidence" value="ECO:0007669"/>
    <property type="project" value="InterPro"/>
</dbReference>
<dbReference type="GO" id="GO:0019288">
    <property type="term" value="P:isopentenyl diphosphate biosynthetic process, methylerythritol 4-phosphate pathway"/>
    <property type="evidence" value="ECO:0007669"/>
    <property type="project" value="UniProtKB-UniRule"/>
</dbReference>
<dbReference type="GO" id="GO:0016114">
    <property type="term" value="P:terpenoid biosynthetic process"/>
    <property type="evidence" value="ECO:0007669"/>
    <property type="project" value="InterPro"/>
</dbReference>
<dbReference type="FunFam" id="3.20.20.20:FF:000001">
    <property type="entry name" value="4-hydroxy-3-methylbut-2-en-1-yl diphosphate synthase (flavodoxin)"/>
    <property type="match status" value="1"/>
</dbReference>
<dbReference type="FunFam" id="3.30.413.10:FF:000002">
    <property type="entry name" value="4-hydroxy-3-methylbut-2-en-1-yl diphosphate synthase (flavodoxin)"/>
    <property type="match status" value="1"/>
</dbReference>
<dbReference type="Gene3D" id="3.20.20.20">
    <property type="entry name" value="Dihydropteroate synthase-like"/>
    <property type="match status" value="1"/>
</dbReference>
<dbReference type="Gene3D" id="3.30.413.10">
    <property type="entry name" value="Sulfite Reductase Hemoprotein, domain 1"/>
    <property type="match status" value="1"/>
</dbReference>
<dbReference type="HAMAP" id="MF_00159">
    <property type="entry name" value="IspG"/>
    <property type="match status" value="1"/>
</dbReference>
<dbReference type="InterPro" id="IPR011005">
    <property type="entry name" value="Dihydropteroate_synth-like_sf"/>
</dbReference>
<dbReference type="InterPro" id="IPR016425">
    <property type="entry name" value="IspG_bac"/>
</dbReference>
<dbReference type="InterPro" id="IPR004588">
    <property type="entry name" value="IspG_bac-typ"/>
</dbReference>
<dbReference type="InterPro" id="IPR045854">
    <property type="entry name" value="NO2/SO3_Rdtase_4Fe4S_sf"/>
</dbReference>
<dbReference type="NCBIfam" id="TIGR00612">
    <property type="entry name" value="ispG_gcpE"/>
    <property type="match status" value="1"/>
</dbReference>
<dbReference type="NCBIfam" id="NF001540">
    <property type="entry name" value="PRK00366.1"/>
    <property type="match status" value="1"/>
</dbReference>
<dbReference type="PANTHER" id="PTHR30454">
    <property type="entry name" value="4-HYDROXY-3-METHYLBUT-2-EN-1-YL DIPHOSPHATE SYNTHASE"/>
    <property type="match status" value="1"/>
</dbReference>
<dbReference type="PANTHER" id="PTHR30454:SF0">
    <property type="entry name" value="4-HYDROXY-3-METHYLBUT-2-EN-1-YL DIPHOSPHATE SYNTHASE (FERREDOXIN), CHLOROPLASTIC"/>
    <property type="match status" value="1"/>
</dbReference>
<dbReference type="Pfam" id="PF04551">
    <property type="entry name" value="GcpE"/>
    <property type="match status" value="1"/>
</dbReference>
<dbReference type="PIRSF" id="PIRSF004640">
    <property type="entry name" value="IspG"/>
    <property type="match status" value="1"/>
</dbReference>
<dbReference type="SUPFAM" id="SSF51717">
    <property type="entry name" value="Dihydropteroate synthetase-like"/>
    <property type="match status" value="1"/>
</dbReference>
<dbReference type="SUPFAM" id="SSF56014">
    <property type="entry name" value="Nitrite and sulphite reductase 4Fe-4S domain-like"/>
    <property type="match status" value="1"/>
</dbReference>
<comment type="function">
    <text evidence="1">Converts 2C-methyl-D-erythritol 2,4-cyclodiphosphate (ME-2,4cPP) into 1-hydroxy-2-methyl-2-(E)-butenyl 4-diphosphate.</text>
</comment>
<comment type="catalytic activity">
    <reaction evidence="1">
        <text>(2E)-4-hydroxy-3-methylbut-2-enyl diphosphate + oxidized [flavodoxin] + H2O + 2 H(+) = 2-C-methyl-D-erythritol 2,4-cyclic diphosphate + reduced [flavodoxin]</text>
        <dbReference type="Rhea" id="RHEA:43604"/>
        <dbReference type="Rhea" id="RHEA-COMP:10622"/>
        <dbReference type="Rhea" id="RHEA-COMP:10623"/>
        <dbReference type="ChEBI" id="CHEBI:15377"/>
        <dbReference type="ChEBI" id="CHEBI:15378"/>
        <dbReference type="ChEBI" id="CHEBI:57618"/>
        <dbReference type="ChEBI" id="CHEBI:58210"/>
        <dbReference type="ChEBI" id="CHEBI:58483"/>
        <dbReference type="ChEBI" id="CHEBI:128753"/>
        <dbReference type="EC" id="1.17.7.3"/>
    </reaction>
</comment>
<comment type="cofactor">
    <cofactor evidence="1">
        <name>[4Fe-4S] cluster</name>
        <dbReference type="ChEBI" id="CHEBI:49883"/>
    </cofactor>
    <text evidence="1">Binds 1 [4Fe-4S] cluster.</text>
</comment>
<comment type="pathway">
    <text evidence="1">Isoprenoid biosynthesis; isopentenyl diphosphate biosynthesis via DXP pathway; isopentenyl diphosphate from 1-deoxy-D-xylulose 5-phosphate: step 5/6.</text>
</comment>
<comment type="similarity">
    <text evidence="1">Belongs to the IspG family.</text>
</comment>
<organism>
    <name type="scientific">Vibrio vulnificus (strain CMCP6)</name>
    <dbReference type="NCBI Taxonomy" id="216895"/>
    <lineage>
        <taxon>Bacteria</taxon>
        <taxon>Pseudomonadati</taxon>
        <taxon>Pseudomonadota</taxon>
        <taxon>Gammaproteobacteria</taxon>
        <taxon>Vibrionales</taxon>
        <taxon>Vibrionaceae</taxon>
        <taxon>Vibrio</taxon>
    </lineage>
</organism>